<feature type="chain" id="PRO_0000199355" description="Formate--tetrahydrofolate ligase">
    <location>
        <begin position="1"/>
        <end position="555"/>
    </location>
</feature>
<feature type="binding site" evidence="1">
    <location>
        <begin position="65"/>
        <end position="72"/>
    </location>
    <ligand>
        <name>ATP</name>
        <dbReference type="ChEBI" id="CHEBI:30616"/>
    </ligand>
</feature>
<comment type="catalytic activity">
    <reaction evidence="1">
        <text>(6S)-5,6,7,8-tetrahydrofolate + formate + ATP = (6R)-10-formyltetrahydrofolate + ADP + phosphate</text>
        <dbReference type="Rhea" id="RHEA:20221"/>
        <dbReference type="ChEBI" id="CHEBI:15740"/>
        <dbReference type="ChEBI" id="CHEBI:30616"/>
        <dbReference type="ChEBI" id="CHEBI:43474"/>
        <dbReference type="ChEBI" id="CHEBI:57453"/>
        <dbReference type="ChEBI" id="CHEBI:195366"/>
        <dbReference type="ChEBI" id="CHEBI:456216"/>
        <dbReference type="EC" id="6.3.4.3"/>
    </reaction>
</comment>
<comment type="pathway">
    <text evidence="1">One-carbon metabolism; tetrahydrofolate interconversion.</text>
</comment>
<comment type="similarity">
    <text evidence="1">Belongs to the formate--tetrahydrofolate ligase family.</text>
</comment>
<sequence>MKTDIEIAQAADIQPITKIAEKIGLSFDDIELYGKYKAKIPLEVLDKFDQQSEGKLVLVTSINPTPAGEGKSTVTVGLADAFARQGKNVMVALREPSLGPVMGIKGGAAGGGFAQVLPMEDINLHFTGDIHAITTANNAISAFLDNSLHQGNPLNIDPRRIIWKRVVDLNDRALRHVTVGLGGPLNGVPREDGFDITVVSEIMAVLCLATSISDLKERLGKIVLAQSYDRKPVTLGDLGVQGAIAMLLKDALKPNLVQTIEGTPALIHGGPFANIAHGCNSVLATKTALKLSDIVITEAGFGADLGGEKFLDIKTRQLGKQPDAVVIVATLRALKMHGGLDKKELTKENVEAVKKGFANLERHIKNMQSYGLPVIVAINEFASDTKSEISALKDLTEALGVPVSLTQVFAKGGEGGLDLAEKLSGMLQEKSDFSYLYDLKEPLSAKIDKVVTEIYGGSKVNYSPKAKRQMREIEENGWNDLPVCMAKTQYSFSDQPNLLAAPEGFEVTVRELLPKIGAGFIVALLGDVMTMPGLPKNPASLKMDVTDDGKISGLF</sequence>
<accession>Q9CH07</accession>
<organism>
    <name type="scientific">Lactococcus lactis subsp. lactis (strain IL1403)</name>
    <name type="common">Streptococcus lactis</name>
    <dbReference type="NCBI Taxonomy" id="272623"/>
    <lineage>
        <taxon>Bacteria</taxon>
        <taxon>Bacillati</taxon>
        <taxon>Bacillota</taxon>
        <taxon>Bacilli</taxon>
        <taxon>Lactobacillales</taxon>
        <taxon>Streptococcaceae</taxon>
        <taxon>Lactococcus</taxon>
    </lineage>
</organism>
<protein>
    <recommendedName>
        <fullName evidence="1">Formate--tetrahydrofolate ligase</fullName>
        <ecNumber evidence="1">6.3.4.3</ecNumber>
    </recommendedName>
    <alternativeName>
        <fullName evidence="1">Formyltetrahydrofolate synthetase</fullName>
        <shortName evidence="1">FHS</shortName>
        <shortName evidence="1">FTHFS</shortName>
    </alternativeName>
</protein>
<evidence type="ECO:0000255" key="1">
    <source>
        <dbReference type="HAMAP-Rule" id="MF_01543"/>
    </source>
</evidence>
<gene>
    <name evidence="1" type="primary">fhs</name>
    <name type="ordered locus">LL0935</name>
    <name type="ORF">L159505</name>
</gene>
<proteinExistence type="inferred from homology"/>
<keyword id="KW-0067">ATP-binding</keyword>
<keyword id="KW-0436">Ligase</keyword>
<keyword id="KW-0547">Nucleotide-binding</keyword>
<keyword id="KW-0554">One-carbon metabolism</keyword>
<keyword id="KW-1185">Reference proteome</keyword>
<dbReference type="EC" id="6.3.4.3" evidence="1"/>
<dbReference type="EMBL" id="AE005176">
    <property type="protein sequence ID" value="AAK05033.1"/>
    <property type="molecule type" value="Genomic_DNA"/>
</dbReference>
<dbReference type="PIR" id="G86741">
    <property type="entry name" value="G86741"/>
</dbReference>
<dbReference type="RefSeq" id="NP_267091.1">
    <property type="nucleotide sequence ID" value="NC_002662.1"/>
</dbReference>
<dbReference type="RefSeq" id="WP_010905639.1">
    <property type="nucleotide sequence ID" value="NC_002662.1"/>
</dbReference>
<dbReference type="SMR" id="Q9CH07"/>
<dbReference type="PaxDb" id="272623-L159505"/>
<dbReference type="EnsemblBacteria" id="AAK05033">
    <property type="protein sequence ID" value="AAK05033"/>
    <property type="gene ID" value="L159505"/>
</dbReference>
<dbReference type="KEGG" id="lla:L159505"/>
<dbReference type="PATRIC" id="fig|272623.7.peg.1000"/>
<dbReference type="eggNOG" id="COG2759">
    <property type="taxonomic scope" value="Bacteria"/>
</dbReference>
<dbReference type="HOGENOM" id="CLU_003601_3_3_9"/>
<dbReference type="OrthoDB" id="9761733at2"/>
<dbReference type="UniPathway" id="UPA00193"/>
<dbReference type="Proteomes" id="UP000002196">
    <property type="component" value="Chromosome"/>
</dbReference>
<dbReference type="GO" id="GO:0005524">
    <property type="term" value="F:ATP binding"/>
    <property type="evidence" value="ECO:0007669"/>
    <property type="project" value="UniProtKB-UniRule"/>
</dbReference>
<dbReference type="GO" id="GO:0004329">
    <property type="term" value="F:formate-tetrahydrofolate ligase activity"/>
    <property type="evidence" value="ECO:0007669"/>
    <property type="project" value="UniProtKB-UniRule"/>
</dbReference>
<dbReference type="GO" id="GO:0035999">
    <property type="term" value="P:tetrahydrofolate interconversion"/>
    <property type="evidence" value="ECO:0007669"/>
    <property type="project" value="UniProtKB-UniRule"/>
</dbReference>
<dbReference type="CDD" id="cd00477">
    <property type="entry name" value="FTHFS"/>
    <property type="match status" value="1"/>
</dbReference>
<dbReference type="FunFam" id="3.30.1510.10:FF:000001">
    <property type="entry name" value="Formate--tetrahydrofolate ligase"/>
    <property type="match status" value="1"/>
</dbReference>
<dbReference type="FunFam" id="3.10.410.10:FF:000001">
    <property type="entry name" value="Putative formate--tetrahydrofolate ligase"/>
    <property type="match status" value="1"/>
</dbReference>
<dbReference type="Gene3D" id="3.30.1510.10">
    <property type="entry name" value="Domain 2, N(10)-formyltetrahydrofolate synthetase"/>
    <property type="match status" value="1"/>
</dbReference>
<dbReference type="Gene3D" id="3.10.410.10">
    <property type="entry name" value="Formyltetrahydrofolate synthetase, domain 3"/>
    <property type="match status" value="1"/>
</dbReference>
<dbReference type="Gene3D" id="3.40.50.300">
    <property type="entry name" value="P-loop containing nucleotide triphosphate hydrolases"/>
    <property type="match status" value="1"/>
</dbReference>
<dbReference type="HAMAP" id="MF_01543">
    <property type="entry name" value="FTHFS"/>
    <property type="match status" value="1"/>
</dbReference>
<dbReference type="InterPro" id="IPR000559">
    <property type="entry name" value="Formate_THF_ligase"/>
</dbReference>
<dbReference type="InterPro" id="IPR020628">
    <property type="entry name" value="Formate_THF_ligase_CS"/>
</dbReference>
<dbReference type="InterPro" id="IPR027417">
    <property type="entry name" value="P-loop_NTPase"/>
</dbReference>
<dbReference type="NCBIfam" id="NF010030">
    <property type="entry name" value="PRK13505.1"/>
    <property type="match status" value="1"/>
</dbReference>
<dbReference type="Pfam" id="PF01268">
    <property type="entry name" value="FTHFS"/>
    <property type="match status" value="1"/>
</dbReference>
<dbReference type="SUPFAM" id="SSF52540">
    <property type="entry name" value="P-loop containing nucleoside triphosphate hydrolases"/>
    <property type="match status" value="1"/>
</dbReference>
<dbReference type="PROSITE" id="PS00721">
    <property type="entry name" value="FTHFS_1"/>
    <property type="match status" value="1"/>
</dbReference>
<dbReference type="PROSITE" id="PS00722">
    <property type="entry name" value="FTHFS_2"/>
    <property type="match status" value="1"/>
</dbReference>
<reference key="1">
    <citation type="journal article" date="2001" name="Genome Res.">
        <title>The complete genome sequence of the lactic acid bacterium Lactococcus lactis ssp. lactis IL1403.</title>
        <authorList>
            <person name="Bolotin A."/>
            <person name="Wincker P."/>
            <person name="Mauger S."/>
            <person name="Jaillon O."/>
            <person name="Malarme K."/>
            <person name="Weissenbach J."/>
            <person name="Ehrlich S.D."/>
            <person name="Sorokin A."/>
        </authorList>
    </citation>
    <scope>NUCLEOTIDE SEQUENCE [LARGE SCALE GENOMIC DNA]</scope>
    <source>
        <strain>IL1403</strain>
    </source>
</reference>
<name>FTHS_LACLA</name>